<gene>
    <name evidence="4" type="primary">rbdB</name>
    <name type="ORF">AFUA_6G12750</name>
</gene>
<comment type="function">
    <text evidence="3">Rhomboid protease that catalyzes intramembrane proteolysis (PubMed:27303716). Required for transcription factor srbA activation by mediating its release from the membrane and thereby regulating its activity under hypoxic conditions (PubMed:27303716). Essential for iron homeostasis and resistance to azoles such as voriconazole (PubMed:27303716). Required for virulence in murine models of invasive pulmonary aspergillosis (IPA) (PubMed:27303716).</text>
</comment>
<comment type="catalytic activity">
    <reaction evidence="3">
        <text>Cleaves type-1 transmembrane domains using a catalytic dyad composed of serine and histidine that are contributed by different transmembrane domains.</text>
        <dbReference type="EC" id="3.4.21.105"/>
    </reaction>
</comment>
<comment type="subcellular location">
    <subcellularLocation>
        <location evidence="2">Membrane</location>
        <topology evidence="2">Multi-pass membrane protein</topology>
    </subcellularLocation>
</comment>
<comment type="disruption phenotype">
    <text evidence="3">Impairs growth under hypoxic conditions and leads to increased azole drug susceptibility, reduced siderophore production, and full loss of virulence in a murine model of invasive pulmonary aspergillosis (IPA).</text>
</comment>
<comment type="similarity">
    <text evidence="5">Belongs to the peptidase S54 family.</text>
</comment>
<protein>
    <recommendedName>
        <fullName evidence="4">Rhomboid-type serine protease B</fullName>
        <ecNumber evidence="3">3.4.21.105</ecNumber>
    </recommendedName>
    <alternativeName>
        <fullName evidence="4">Golgi rhomboid protease rbdB</fullName>
    </alternativeName>
    <alternativeName>
        <fullName evidence="4">Rhomboid protein B</fullName>
    </alternativeName>
</protein>
<organism>
    <name type="scientific">Aspergillus fumigatus (strain ATCC MYA-4609 / CBS 101355 / FGSC A1100 / Af293)</name>
    <name type="common">Neosartorya fumigata</name>
    <dbReference type="NCBI Taxonomy" id="330879"/>
    <lineage>
        <taxon>Eukaryota</taxon>
        <taxon>Fungi</taxon>
        <taxon>Dikarya</taxon>
        <taxon>Ascomycota</taxon>
        <taxon>Pezizomycotina</taxon>
        <taxon>Eurotiomycetes</taxon>
        <taxon>Eurotiomycetidae</taxon>
        <taxon>Eurotiales</taxon>
        <taxon>Aspergillaceae</taxon>
        <taxon>Aspergillus</taxon>
        <taxon>Aspergillus subgen. Fumigati</taxon>
    </lineage>
</organism>
<keyword id="KW-0378">Hydrolase</keyword>
<keyword id="KW-0472">Membrane</keyword>
<keyword id="KW-0645">Protease</keyword>
<keyword id="KW-1185">Reference proteome</keyword>
<keyword id="KW-0720">Serine protease</keyword>
<keyword id="KW-0812">Transmembrane</keyword>
<keyword id="KW-1133">Transmembrane helix</keyword>
<evidence type="ECO:0000250" key="1">
    <source>
        <dbReference type="UniProtKB" id="O74926"/>
    </source>
</evidence>
<evidence type="ECO:0000255" key="2"/>
<evidence type="ECO:0000269" key="3">
    <source>
    </source>
</evidence>
<evidence type="ECO:0000303" key="4">
    <source>
    </source>
</evidence>
<evidence type="ECO:0000305" key="5"/>
<dbReference type="EC" id="3.4.21.105" evidence="3"/>
<dbReference type="EMBL" id="AAHF01000006">
    <property type="protein sequence ID" value="EAL89115.1"/>
    <property type="molecule type" value="Genomic_DNA"/>
</dbReference>
<dbReference type="RefSeq" id="XP_751153.1">
    <property type="nucleotide sequence ID" value="XM_746060.1"/>
</dbReference>
<dbReference type="FunCoup" id="Q4WLP9">
    <property type="interactions" value="65"/>
</dbReference>
<dbReference type="STRING" id="330879.Q4WLP9"/>
<dbReference type="EnsemblFungi" id="EAL89115">
    <property type="protein sequence ID" value="EAL89115"/>
    <property type="gene ID" value="AFUA_6G12750"/>
</dbReference>
<dbReference type="GeneID" id="3508460"/>
<dbReference type="KEGG" id="afm:AFUA_6G12750"/>
<dbReference type="VEuPathDB" id="FungiDB:Afu6g12750"/>
<dbReference type="eggNOG" id="KOG2632">
    <property type="taxonomic scope" value="Eukaryota"/>
</dbReference>
<dbReference type="HOGENOM" id="CLU_084816_0_0_1"/>
<dbReference type="InParanoid" id="Q4WLP9"/>
<dbReference type="OMA" id="NTYPIVH"/>
<dbReference type="OrthoDB" id="10257275at2759"/>
<dbReference type="PHI-base" id="PHI:6861"/>
<dbReference type="Proteomes" id="UP000002530">
    <property type="component" value="Chromosome 6"/>
</dbReference>
<dbReference type="GO" id="GO:0016020">
    <property type="term" value="C:membrane"/>
    <property type="evidence" value="ECO:0007669"/>
    <property type="project" value="UniProtKB-SubCell"/>
</dbReference>
<dbReference type="GO" id="GO:0004252">
    <property type="term" value="F:serine-type endopeptidase activity"/>
    <property type="evidence" value="ECO:0000318"/>
    <property type="project" value="GO_Central"/>
</dbReference>
<dbReference type="GO" id="GO:0006508">
    <property type="term" value="P:proteolysis"/>
    <property type="evidence" value="ECO:0007669"/>
    <property type="project" value="UniProtKB-KW"/>
</dbReference>
<dbReference type="Gene3D" id="1.20.1540.10">
    <property type="entry name" value="Rhomboid-like"/>
    <property type="match status" value="1"/>
</dbReference>
<dbReference type="InterPro" id="IPR022764">
    <property type="entry name" value="Peptidase_S54_rhomboid_dom"/>
</dbReference>
<dbReference type="InterPro" id="IPR035952">
    <property type="entry name" value="Rhomboid-like_sf"/>
</dbReference>
<dbReference type="PANTHER" id="PTHR43066:SF1">
    <property type="entry name" value="RHOMBOID PROTEIN 2"/>
    <property type="match status" value="1"/>
</dbReference>
<dbReference type="PANTHER" id="PTHR43066">
    <property type="entry name" value="RHOMBOID-RELATED PROTEIN"/>
    <property type="match status" value="1"/>
</dbReference>
<dbReference type="Pfam" id="PF01694">
    <property type="entry name" value="Rhomboid"/>
    <property type="match status" value="1"/>
</dbReference>
<dbReference type="SUPFAM" id="SSF144091">
    <property type="entry name" value="Rhomboid-like"/>
    <property type="match status" value="1"/>
</dbReference>
<reference key="1">
    <citation type="journal article" date="2005" name="Nature">
        <title>Genomic sequence of the pathogenic and allergenic filamentous fungus Aspergillus fumigatus.</title>
        <authorList>
            <person name="Nierman W.C."/>
            <person name="Pain A."/>
            <person name="Anderson M.J."/>
            <person name="Wortman J.R."/>
            <person name="Kim H.S."/>
            <person name="Arroyo J."/>
            <person name="Berriman M."/>
            <person name="Abe K."/>
            <person name="Archer D.B."/>
            <person name="Bermejo C."/>
            <person name="Bennett J.W."/>
            <person name="Bowyer P."/>
            <person name="Chen D."/>
            <person name="Collins M."/>
            <person name="Coulsen R."/>
            <person name="Davies R."/>
            <person name="Dyer P.S."/>
            <person name="Farman M.L."/>
            <person name="Fedorova N."/>
            <person name="Fedorova N.D."/>
            <person name="Feldblyum T.V."/>
            <person name="Fischer R."/>
            <person name="Fosker N."/>
            <person name="Fraser A."/>
            <person name="Garcia J.L."/>
            <person name="Garcia M.J."/>
            <person name="Goble A."/>
            <person name="Goldman G.H."/>
            <person name="Gomi K."/>
            <person name="Griffith-Jones S."/>
            <person name="Gwilliam R."/>
            <person name="Haas B.J."/>
            <person name="Haas H."/>
            <person name="Harris D.E."/>
            <person name="Horiuchi H."/>
            <person name="Huang J."/>
            <person name="Humphray S."/>
            <person name="Jimenez J."/>
            <person name="Keller N."/>
            <person name="Khouri H."/>
            <person name="Kitamoto K."/>
            <person name="Kobayashi T."/>
            <person name="Konzack S."/>
            <person name="Kulkarni R."/>
            <person name="Kumagai T."/>
            <person name="Lafton A."/>
            <person name="Latge J.-P."/>
            <person name="Li W."/>
            <person name="Lord A."/>
            <person name="Lu C."/>
            <person name="Majoros W.H."/>
            <person name="May G.S."/>
            <person name="Miller B.L."/>
            <person name="Mohamoud Y."/>
            <person name="Molina M."/>
            <person name="Monod M."/>
            <person name="Mouyna I."/>
            <person name="Mulligan S."/>
            <person name="Murphy L.D."/>
            <person name="O'Neil S."/>
            <person name="Paulsen I."/>
            <person name="Penalva M.A."/>
            <person name="Pertea M."/>
            <person name="Price C."/>
            <person name="Pritchard B.L."/>
            <person name="Quail M.A."/>
            <person name="Rabbinowitsch E."/>
            <person name="Rawlins N."/>
            <person name="Rajandream M.A."/>
            <person name="Reichard U."/>
            <person name="Renauld H."/>
            <person name="Robson G.D."/>
            <person name="Rodriguez de Cordoba S."/>
            <person name="Rodriguez-Pena J.M."/>
            <person name="Ronning C.M."/>
            <person name="Rutter S."/>
            <person name="Salzberg S.L."/>
            <person name="Sanchez M."/>
            <person name="Sanchez-Ferrero J.C."/>
            <person name="Saunders D."/>
            <person name="Seeger K."/>
            <person name="Squares R."/>
            <person name="Squares S."/>
            <person name="Takeuchi M."/>
            <person name="Tekaia F."/>
            <person name="Turner G."/>
            <person name="Vazquez de Aldana C.R."/>
            <person name="Weidman J."/>
            <person name="White O."/>
            <person name="Woodward J.R."/>
            <person name="Yu J.-H."/>
            <person name="Fraser C.M."/>
            <person name="Galagan J.E."/>
            <person name="Asai K."/>
            <person name="Machida M."/>
            <person name="Hall N."/>
            <person name="Barrell B.G."/>
            <person name="Denning D.W."/>
        </authorList>
    </citation>
    <scope>NUCLEOTIDE SEQUENCE [LARGE SCALE GENOMIC DNA]</scope>
    <source>
        <strain>ATCC MYA-4609 / CBS 101355 / FGSC A1100 / Af293</strain>
    </source>
</reference>
<reference key="2">
    <citation type="journal article" date="2016" name="MSphere">
        <title>RbdB, a Rhomboid Protease Critical for SREBP Activation and Virulence in Aspergillus fumigatus.</title>
        <authorList>
            <person name="Dhingra S."/>
            <person name="Kowalski C.H."/>
            <person name="Thammahong A."/>
            <person name="Beattie S.R."/>
            <person name="Bultman K.M."/>
            <person name="Cramer R.A."/>
        </authorList>
    </citation>
    <scope>FUNCTION</scope>
    <scope>DISRUPTION PHENOTYPE</scope>
</reference>
<proteinExistence type="inferred from homology"/>
<accession>Q4WLP9</accession>
<feature type="chain" id="PRO_0000206183" description="Rhomboid-type serine protease B">
    <location>
        <begin position="1"/>
        <end position="272"/>
    </location>
</feature>
<feature type="transmembrane region" description="Helical" evidence="2">
    <location>
        <begin position="30"/>
        <end position="50"/>
    </location>
</feature>
<feature type="transmembrane region" description="Helical" evidence="2">
    <location>
        <begin position="72"/>
        <end position="92"/>
    </location>
</feature>
<feature type="transmembrane region" description="Helical" evidence="2">
    <location>
        <begin position="103"/>
        <end position="123"/>
    </location>
</feature>
<feature type="transmembrane region" description="Helical" evidence="2">
    <location>
        <begin position="133"/>
        <end position="153"/>
    </location>
</feature>
<feature type="transmembrane region" description="Helical" evidence="2">
    <location>
        <begin position="164"/>
        <end position="184"/>
    </location>
</feature>
<feature type="transmembrane region" description="Helical" evidence="2">
    <location>
        <begin position="186"/>
        <end position="206"/>
    </location>
</feature>
<feature type="active site" description="Nucleophile" evidence="1">
    <location>
        <position position="138"/>
    </location>
</feature>
<feature type="active site" evidence="1">
    <location>
        <position position="191"/>
    </location>
</feature>
<name>RBDB_ASPFU</name>
<sequence length="272" mass="30091">MAIPAALPPLPFNPTRVRSYMLRLPLFTRLVLLVILAFWLLELQTIWSVVQWGSLTPNEIGIGSMYRLNTYPFIHVGFFHAFVNLLALTPLLERFEAEHGTLTAVALFIGPLSTFPAGIYILVEKFILRSNTAVVGASVWIFLLLGSEAIKTFKSNPYFSLGTTKIPTWTSPLFACALVSIFVPNTSFLGHLSAIIIGYLLGLGYLKVFVPPEKILRWIEGKLNLLGRLPHYVSVDQKTYGRYGVLPTATAAVGGERPTPLSYLGTNQRLGP</sequence>